<gene>
    <name type="primary">Adck5</name>
</gene>
<feature type="chain" id="PRO_0000271801" description="Uncharacterized aarF domain-containing protein kinase 5">
    <location>
        <begin position="1"/>
        <end position="582"/>
    </location>
</feature>
<feature type="transmembrane region" description="Helical" evidence="1">
    <location>
        <begin position="50"/>
        <end position="69"/>
    </location>
</feature>
<feature type="domain" description="Protein kinase">
    <location>
        <begin position="179"/>
        <end position="419"/>
    </location>
</feature>
<feature type="splice variant" id="VSP_022358" description="In isoform 2." evidence="2 3">
    <location>
        <begin position="1"/>
        <end position="122"/>
    </location>
</feature>
<feature type="sequence conflict" description="In Ref. 1; BAC30280 and 3; AAH60528." evidence="4" ref="1 3">
    <original>A</original>
    <variation>T</variation>
    <location>
        <position position="133"/>
    </location>
</feature>
<dbReference type="EC" id="2.7.11.-"/>
<dbReference type="EMBL" id="AK039217">
    <property type="protein sequence ID" value="BAC30280.1"/>
    <property type="molecule type" value="mRNA"/>
</dbReference>
<dbReference type="EMBL" id="AC157566">
    <property type="status" value="NOT_ANNOTATED_CDS"/>
    <property type="molecule type" value="Genomic_DNA"/>
</dbReference>
<dbReference type="EMBL" id="BC030881">
    <property type="status" value="NOT_ANNOTATED_CDS"/>
    <property type="molecule type" value="mRNA"/>
</dbReference>
<dbReference type="EMBL" id="BC060528">
    <property type="protein sequence ID" value="AAH60528.1"/>
    <property type="molecule type" value="mRNA"/>
</dbReference>
<dbReference type="CCDS" id="CCDS27576.2">
    <molecule id="Q80V03-1"/>
</dbReference>
<dbReference type="RefSeq" id="NP_766548.2">
    <property type="nucleotide sequence ID" value="NM_172960.3"/>
</dbReference>
<dbReference type="SMR" id="Q80V03"/>
<dbReference type="BioGRID" id="234564">
    <property type="interactions" value="1"/>
</dbReference>
<dbReference type="FunCoup" id="Q80V03">
    <property type="interactions" value="552"/>
</dbReference>
<dbReference type="STRING" id="10090.ENSMUSP00000125055"/>
<dbReference type="iPTMnet" id="Q80V03"/>
<dbReference type="PhosphoSitePlus" id="Q80V03"/>
<dbReference type="jPOST" id="Q80V03"/>
<dbReference type="PaxDb" id="10090-ENSMUSP00000125055"/>
<dbReference type="ProteomicsDB" id="285679">
    <molecule id="Q80V03-1"/>
</dbReference>
<dbReference type="ProteomicsDB" id="285680">
    <molecule id="Q80V03-2"/>
</dbReference>
<dbReference type="Pumba" id="Q80V03"/>
<dbReference type="DNASU" id="268822"/>
<dbReference type="GeneID" id="268822"/>
<dbReference type="KEGG" id="mmu:268822"/>
<dbReference type="AGR" id="MGI:2679274"/>
<dbReference type="CTD" id="203054"/>
<dbReference type="MGI" id="MGI:2679274">
    <property type="gene designation" value="Adck5"/>
</dbReference>
<dbReference type="eggNOG" id="KOG1235">
    <property type="taxonomic scope" value="Eukaryota"/>
</dbReference>
<dbReference type="InParanoid" id="Q80V03"/>
<dbReference type="OrthoDB" id="427480at2759"/>
<dbReference type="PhylomeDB" id="Q80V03"/>
<dbReference type="BioGRID-ORCS" id="268822">
    <property type="hits" value="3 hits in 80 CRISPR screens"/>
</dbReference>
<dbReference type="ChiTaRS" id="Adck5">
    <property type="organism name" value="mouse"/>
</dbReference>
<dbReference type="PRO" id="PR:Q80V03"/>
<dbReference type="Proteomes" id="UP000000589">
    <property type="component" value="Unplaced"/>
</dbReference>
<dbReference type="RNAct" id="Q80V03">
    <property type="molecule type" value="protein"/>
</dbReference>
<dbReference type="GO" id="GO:0016020">
    <property type="term" value="C:membrane"/>
    <property type="evidence" value="ECO:0007669"/>
    <property type="project" value="UniProtKB-SubCell"/>
</dbReference>
<dbReference type="GO" id="GO:0005739">
    <property type="term" value="C:mitochondrion"/>
    <property type="evidence" value="ECO:0007005"/>
    <property type="project" value="MGI"/>
</dbReference>
<dbReference type="GO" id="GO:0004674">
    <property type="term" value="F:protein serine/threonine kinase activity"/>
    <property type="evidence" value="ECO:0007669"/>
    <property type="project" value="UniProtKB-KW"/>
</dbReference>
<dbReference type="CDD" id="cd13969">
    <property type="entry name" value="ADCK1-like"/>
    <property type="match status" value="1"/>
</dbReference>
<dbReference type="InterPro" id="IPR004147">
    <property type="entry name" value="ABC1_dom"/>
</dbReference>
<dbReference type="InterPro" id="IPR045307">
    <property type="entry name" value="ADCK1_dom"/>
</dbReference>
<dbReference type="InterPro" id="IPR011009">
    <property type="entry name" value="Kinase-like_dom_sf"/>
</dbReference>
<dbReference type="InterPro" id="IPR051130">
    <property type="entry name" value="Mito_struct-func_regulator"/>
</dbReference>
<dbReference type="PANTHER" id="PTHR43173:SF28">
    <property type="entry name" value="AARF DOMAIN CONTAINING KINASE 5"/>
    <property type="match status" value="1"/>
</dbReference>
<dbReference type="PANTHER" id="PTHR43173">
    <property type="entry name" value="ABC1 FAMILY PROTEIN"/>
    <property type="match status" value="1"/>
</dbReference>
<dbReference type="Pfam" id="PF03109">
    <property type="entry name" value="ABC1"/>
    <property type="match status" value="1"/>
</dbReference>
<dbReference type="SUPFAM" id="SSF56112">
    <property type="entry name" value="Protein kinase-like (PK-like)"/>
    <property type="match status" value="1"/>
</dbReference>
<accession>Q80V03</accession>
<accession>Q8CAA3</accession>
<reference key="1">
    <citation type="journal article" date="2005" name="Science">
        <title>The transcriptional landscape of the mammalian genome.</title>
        <authorList>
            <person name="Carninci P."/>
            <person name="Kasukawa T."/>
            <person name="Katayama S."/>
            <person name="Gough J."/>
            <person name="Frith M.C."/>
            <person name="Maeda N."/>
            <person name="Oyama R."/>
            <person name="Ravasi T."/>
            <person name="Lenhard B."/>
            <person name="Wells C."/>
            <person name="Kodzius R."/>
            <person name="Shimokawa K."/>
            <person name="Bajic V.B."/>
            <person name="Brenner S.E."/>
            <person name="Batalov S."/>
            <person name="Forrest A.R."/>
            <person name="Zavolan M."/>
            <person name="Davis M.J."/>
            <person name="Wilming L.G."/>
            <person name="Aidinis V."/>
            <person name="Allen J.E."/>
            <person name="Ambesi-Impiombato A."/>
            <person name="Apweiler R."/>
            <person name="Aturaliya R.N."/>
            <person name="Bailey T.L."/>
            <person name="Bansal M."/>
            <person name="Baxter L."/>
            <person name="Beisel K.W."/>
            <person name="Bersano T."/>
            <person name="Bono H."/>
            <person name="Chalk A.M."/>
            <person name="Chiu K.P."/>
            <person name="Choudhary V."/>
            <person name="Christoffels A."/>
            <person name="Clutterbuck D.R."/>
            <person name="Crowe M.L."/>
            <person name="Dalla E."/>
            <person name="Dalrymple B.P."/>
            <person name="de Bono B."/>
            <person name="Della Gatta G."/>
            <person name="di Bernardo D."/>
            <person name="Down T."/>
            <person name="Engstrom P."/>
            <person name="Fagiolini M."/>
            <person name="Faulkner G."/>
            <person name="Fletcher C.F."/>
            <person name="Fukushima T."/>
            <person name="Furuno M."/>
            <person name="Futaki S."/>
            <person name="Gariboldi M."/>
            <person name="Georgii-Hemming P."/>
            <person name="Gingeras T.R."/>
            <person name="Gojobori T."/>
            <person name="Green R.E."/>
            <person name="Gustincich S."/>
            <person name="Harbers M."/>
            <person name="Hayashi Y."/>
            <person name="Hensch T.K."/>
            <person name="Hirokawa N."/>
            <person name="Hill D."/>
            <person name="Huminiecki L."/>
            <person name="Iacono M."/>
            <person name="Ikeo K."/>
            <person name="Iwama A."/>
            <person name="Ishikawa T."/>
            <person name="Jakt M."/>
            <person name="Kanapin A."/>
            <person name="Katoh M."/>
            <person name="Kawasawa Y."/>
            <person name="Kelso J."/>
            <person name="Kitamura H."/>
            <person name="Kitano H."/>
            <person name="Kollias G."/>
            <person name="Krishnan S.P."/>
            <person name="Kruger A."/>
            <person name="Kummerfeld S.K."/>
            <person name="Kurochkin I.V."/>
            <person name="Lareau L.F."/>
            <person name="Lazarevic D."/>
            <person name="Lipovich L."/>
            <person name="Liu J."/>
            <person name="Liuni S."/>
            <person name="McWilliam S."/>
            <person name="Madan Babu M."/>
            <person name="Madera M."/>
            <person name="Marchionni L."/>
            <person name="Matsuda H."/>
            <person name="Matsuzawa S."/>
            <person name="Miki H."/>
            <person name="Mignone F."/>
            <person name="Miyake S."/>
            <person name="Morris K."/>
            <person name="Mottagui-Tabar S."/>
            <person name="Mulder N."/>
            <person name="Nakano N."/>
            <person name="Nakauchi H."/>
            <person name="Ng P."/>
            <person name="Nilsson R."/>
            <person name="Nishiguchi S."/>
            <person name="Nishikawa S."/>
            <person name="Nori F."/>
            <person name="Ohara O."/>
            <person name="Okazaki Y."/>
            <person name="Orlando V."/>
            <person name="Pang K.C."/>
            <person name="Pavan W.J."/>
            <person name="Pavesi G."/>
            <person name="Pesole G."/>
            <person name="Petrovsky N."/>
            <person name="Piazza S."/>
            <person name="Reed J."/>
            <person name="Reid J.F."/>
            <person name="Ring B.Z."/>
            <person name="Ringwald M."/>
            <person name="Rost B."/>
            <person name="Ruan Y."/>
            <person name="Salzberg S.L."/>
            <person name="Sandelin A."/>
            <person name="Schneider C."/>
            <person name="Schoenbach C."/>
            <person name="Sekiguchi K."/>
            <person name="Semple C.A."/>
            <person name="Seno S."/>
            <person name="Sessa L."/>
            <person name="Sheng Y."/>
            <person name="Shibata Y."/>
            <person name="Shimada H."/>
            <person name="Shimada K."/>
            <person name="Silva D."/>
            <person name="Sinclair B."/>
            <person name="Sperling S."/>
            <person name="Stupka E."/>
            <person name="Sugiura K."/>
            <person name="Sultana R."/>
            <person name="Takenaka Y."/>
            <person name="Taki K."/>
            <person name="Tammoja K."/>
            <person name="Tan S.L."/>
            <person name="Tang S."/>
            <person name="Taylor M.S."/>
            <person name="Tegner J."/>
            <person name="Teichmann S.A."/>
            <person name="Ueda H.R."/>
            <person name="van Nimwegen E."/>
            <person name="Verardo R."/>
            <person name="Wei C.L."/>
            <person name="Yagi K."/>
            <person name="Yamanishi H."/>
            <person name="Zabarovsky E."/>
            <person name="Zhu S."/>
            <person name="Zimmer A."/>
            <person name="Hide W."/>
            <person name="Bult C."/>
            <person name="Grimmond S.M."/>
            <person name="Teasdale R.D."/>
            <person name="Liu E.T."/>
            <person name="Brusic V."/>
            <person name="Quackenbush J."/>
            <person name="Wahlestedt C."/>
            <person name="Mattick J.S."/>
            <person name="Hume D.A."/>
            <person name="Kai C."/>
            <person name="Sasaki D."/>
            <person name="Tomaru Y."/>
            <person name="Fukuda S."/>
            <person name="Kanamori-Katayama M."/>
            <person name="Suzuki M."/>
            <person name="Aoki J."/>
            <person name="Arakawa T."/>
            <person name="Iida J."/>
            <person name="Imamura K."/>
            <person name="Itoh M."/>
            <person name="Kato T."/>
            <person name="Kawaji H."/>
            <person name="Kawagashira N."/>
            <person name="Kawashima T."/>
            <person name="Kojima M."/>
            <person name="Kondo S."/>
            <person name="Konno H."/>
            <person name="Nakano K."/>
            <person name="Ninomiya N."/>
            <person name="Nishio T."/>
            <person name="Okada M."/>
            <person name="Plessy C."/>
            <person name="Shibata K."/>
            <person name="Shiraki T."/>
            <person name="Suzuki S."/>
            <person name="Tagami M."/>
            <person name="Waki K."/>
            <person name="Watahiki A."/>
            <person name="Okamura-Oho Y."/>
            <person name="Suzuki H."/>
            <person name="Kawai J."/>
            <person name="Hayashizaki Y."/>
        </authorList>
    </citation>
    <scope>NUCLEOTIDE SEQUENCE [LARGE SCALE MRNA] (ISOFORM 2)</scope>
    <source>
        <strain>C57BL/6J</strain>
        <tissue>Hypothalamus</tissue>
    </source>
</reference>
<reference key="2">
    <citation type="journal article" date="2009" name="PLoS Biol.">
        <title>Lineage-specific biology revealed by a finished genome assembly of the mouse.</title>
        <authorList>
            <person name="Church D.M."/>
            <person name="Goodstadt L."/>
            <person name="Hillier L.W."/>
            <person name="Zody M.C."/>
            <person name="Goldstein S."/>
            <person name="She X."/>
            <person name="Bult C.J."/>
            <person name="Agarwala R."/>
            <person name="Cherry J.L."/>
            <person name="DiCuccio M."/>
            <person name="Hlavina W."/>
            <person name="Kapustin Y."/>
            <person name="Meric P."/>
            <person name="Maglott D."/>
            <person name="Birtle Z."/>
            <person name="Marques A.C."/>
            <person name="Graves T."/>
            <person name="Zhou S."/>
            <person name="Teague B."/>
            <person name="Potamousis K."/>
            <person name="Churas C."/>
            <person name="Place M."/>
            <person name="Herschleb J."/>
            <person name="Runnheim R."/>
            <person name="Forrest D."/>
            <person name="Amos-Landgraf J."/>
            <person name="Schwartz D.C."/>
            <person name="Cheng Z."/>
            <person name="Lindblad-Toh K."/>
            <person name="Eichler E.E."/>
            <person name="Ponting C.P."/>
        </authorList>
    </citation>
    <scope>NUCLEOTIDE SEQUENCE [LARGE SCALE GENOMIC DNA]</scope>
    <source>
        <strain>C57BL/6J</strain>
    </source>
</reference>
<reference key="3">
    <citation type="journal article" date="2004" name="Genome Res.">
        <title>The status, quality, and expansion of the NIH full-length cDNA project: the Mammalian Gene Collection (MGC).</title>
        <authorList>
            <consortium name="The MGC Project Team"/>
        </authorList>
    </citation>
    <scope>NUCLEOTIDE SEQUENCE [LARGE SCALE MRNA] (ISOFORMS 1 AND 2)</scope>
    <source>
        <strain>C57BL/6J</strain>
        <strain>FVB/N</strain>
        <tissue>Brain</tissue>
        <tissue>Mammary tumor</tissue>
    </source>
</reference>
<name>ADCK5_MOUSE</name>
<protein>
    <recommendedName>
        <fullName>Uncharacterized aarF domain-containing protein kinase 5</fullName>
        <ecNumber>2.7.11.-</ecNumber>
    </recommendedName>
</protein>
<organism>
    <name type="scientific">Mus musculus</name>
    <name type="common">Mouse</name>
    <dbReference type="NCBI Taxonomy" id="10090"/>
    <lineage>
        <taxon>Eukaryota</taxon>
        <taxon>Metazoa</taxon>
        <taxon>Chordata</taxon>
        <taxon>Craniata</taxon>
        <taxon>Vertebrata</taxon>
        <taxon>Euteleostomi</taxon>
        <taxon>Mammalia</taxon>
        <taxon>Eutheria</taxon>
        <taxon>Euarchontoglires</taxon>
        <taxon>Glires</taxon>
        <taxon>Rodentia</taxon>
        <taxon>Myomorpha</taxon>
        <taxon>Muroidea</taxon>
        <taxon>Muridae</taxon>
        <taxon>Murinae</taxon>
        <taxon>Mus</taxon>
        <taxon>Mus</taxon>
    </lineage>
</organism>
<proteinExistence type="evidence at transcript level"/>
<sequence>MWRPMRLCHFHSTLLQSRQKPWPCPAIFFRRNFKSPPARTSRARLLWRRALSATVVGTPFLLGAYYFMAEASERRKLRLAVDGIGRFGRSVKIGLFISTDYWWCTNVVLRGVEENSPKYVEIMSACHQRAADALVAGAIRNGGLYVKLGQGLCSFNHLLPTEYIQTLRVLEDKALTRGFREVDELFLEDFQALPNELFQEFDYEPMAAASLAQVHRAKLHDGTDVAVKVQYIDLRDRFDGDVQTLELLLRLVELMHPSFGFSWVLQDLKGTLVQELDFENEGRNAERCAQELKHFHYVVIPRVHWDRSSKRVLTADFCNGCKVNDMEGIKSQGLAVQDVAKKLIQTFAEQIFHTGFIHSDPHPGNVLVRKGPDGKAELVLLDHGLYQFLDEKDRSSLCQLWRAIILRDNAAMKKHAAALGVQDYMLFSEVLMQRPVRLGQLWGSHLISREEAAYMQDMAREHFDGIMEVLKALPRPMLLVLRNINTVRAINSNLGTPVDRYFLMAKSAVWGWSRLVGAAYQGIYGSSLLRHIKVLWEALKFEMALRLEILAMRLTALMLRVLVRLGFAPKAEAEEVYQYLEM</sequence>
<keyword id="KW-0025">Alternative splicing</keyword>
<keyword id="KW-0418">Kinase</keyword>
<keyword id="KW-0472">Membrane</keyword>
<keyword id="KW-1185">Reference proteome</keyword>
<keyword id="KW-0723">Serine/threonine-protein kinase</keyword>
<keyword id="KW-0808">Transferase</keyword>
<keyword id="KW-0812">Transmembrane</keyword>
<keyword id="KW-1133">Transmembrane helix</keyword>
<evidence type="ECO:0000255" key="1"/>
<evidence type="ECO:0000303" key="2">
    <source>
    </source>
</evidence>
<evidence type="ECO:0000303" key="3">
    <source>
    </source>
</evidence>
<evidence type="ECO:0000305" key="4"/>
<comment type="function">
    <text>The function of this protein is not yet clear. It is not known if it has protein kinase activity and what type of substrate it would phosphorylate (Ser, Thr or Tyr).</text>
</comment>
<comment type="subcellular location">
    <subcellularLocation>
        <location evidence="4">Membrane</location>
        <topology evidence="4">Single-pass membrane protein</topology>
    </subcellularLocation>
</comment>
<comment type="alternative products">
    <event type="alternative splicing"/>
    <isoform>
        <id>Q80V03-1</id>
        <name>1</name>
        <sequence type="displayed"/>
    </isoform>
    <isoform>
        <id>Q80V03-2</id>
        <name>2</name>
        <sequence type="described" ref="VSP_022358"/>
    </isoform>
</comment>
<comment type="similarity">
    <text evidence="4">Belongs to the protein kinase superfamily. ADCK protein kinase family.</text>
</comment>
<comment type="sequence caution" evidence="4">
    <conflict type="miscellaneous discrepancy">
        <sequence resource="EMBL" id="BC030881"/>
    </conflict>
    <text>Intron retention.</text>
</comment>